<gene>
    <name evidence="1" type="primary">rpsH</name>
    <name type="ordered locus">BMA2618</name>
</gene>
<comment type="function">
    <text evidence="1">One of the primary rRNA binding proteins, it binds directly to 16S rRNA central domain where it helps coordinate assembly of the platform of the 30S subunit.</text>
</comment>
<comment type="subunit">
    <text evidence="1">Part of the 30S ribosomal subunit. Contacts proteins S5 and S12.</text>
</comment>
<comment type="similarity">
    <text evidence="1">Belongs to the universal ribosomal protein uS8 family.</text>
</comment>
<evidence type="ECO:0000255" key="1">
    <source>
        <dbReference type="HAMAP-Rule" id="MF_01302"/>
    </source>
</evidence>
<evidence type="ECO:0000305" key="2"/>
<reference key="1">
    <citation type="journal article" date="2004" name="Proc. Natl. Acad. Sci. U.S.A.">
        <title>Structural flexibility in the Burkholderia mallei genome.</title>
        <authorList>
            <person name="Nierman W.C."/>
            <person name="DeShazer D."/>
            <person name="Kim H.S."/>
            <person name="Tettelin H."/>
            <person name="Nelson K.E."/>
            <person name="Feldblyum T.V."/>
            <person name="Ulrich R.L."/>
            <person name="Ronning C.M."/>
            <person name="Brinkac L.M."/>
            <person name="Daugherty S.C."/>
            <person name="Davidsen T.D."/>
            <person name="DeBoy R.T."/>
            <person name="Dimitrov G."/>
            <person name="Dodson R.J."/>
            <person name="Durkin A.S."/>
            <person name="Gwinn M.L."/>
            <person name="Haft D.H."/>
            <person name="Khouri H.M."/>
            <person name="Kolonay J.F."/>
            <person name="Madupu R."/>
            <person name="Mohammoud Y."/>
            <person name="Nelson W.C."/>
            <person name="Radune D."/>
            <person name="Romero C.M."/>
            <person name="Sarria S."/>
            <person name="Selengut J."/>
            <person name="Shamblin C."/>
            <person name="Sullivan S.A."/>
            <person name="White O."/>
            <person name="Yu Y."/>
            <person name="Zafar N."/>
            <person name="Zhou L."/>
            <person name="Fraser C.M."/>
        </authorList>
    </citation>
    <scope>NUCLEOTIDE SEQUENCE [LARGE SCALE GENOMIC DNA]</scope>
    <source>
        <strain>ATCC 23344</strain>
    </source>
</reference>
<sequence length="131" mass="14199">MSMSDPIADMLTRIRNAQMVEKVSVSMPSSKVKVAIAQVLKDEGYIDDFAVKADGAKAELNIALKYYAGRPVIERLERVSKPGLRVYRGRNEIPQVMNGLGVAIVSTPKGVMTDRKARATGVGGEVICYVA</sequence>
<proteinExistence type="inferred from homology"/>
<accession>Q62GL9</accession>
<keyword id="KW-1185">Reference proteome</keyword>
<keyword id="KW-0687">Ribonucleoprotein</keyword>
<keyword id="KW-0689">Ribosomal protein</keyword>
<keyword id="KW-0694">RNA-binding</keyword>
<keyword id="KW-0699">rRNA-binding</keyword>
<dbReference type="EMBL" id="CP000010">
    <property type="protein sequence ID" value="AAU47856.1"/>
    <property type="molecule type" value="Genomic_DNA"/>
</dbReference>
<dbReference type="RefSeq" id="WP_004185153.1">
    <property type="nucleotide sequence ID" value="NC_006348.1"/>
</dbReference>
<dbReference type="RefSeq" id="YP_104152.1">
    <property type="nucleotide sequence ID" value="NC_006348.1"/>
</dbReference>
<dbReference type="SMR" id="Q62GL9"/>
<dbReference type="GeneID" id="93061818"/>
<dbReference type="KEGG" id="bma:BMA2618"/>
<dbReference type="PATRIC" id="fig|243160.12.peg.2689"/>
<dbReference type="eggNOG" id="COG0096">
    <property type="taxonomic scope" value="Bacteria"/>
</dbReference>
<dbReference type="HOGENOM" id="CLU_098428_0_0_4"/>
<dbReference type="Proteomes" id="UP000006693">
    <property type="component" value="Chromosome 1"/>
</dbReference>
<dbReference type="GO" id="GO:1990904">
    <property type="term" value="C:ribonucleoprotein complex"/>
    <property type="evidence" value="ECO:0007669"/>
    <property type="project" value="UniProtKB-KW"/>
</dbReference>
<dbReference type="GO" id="GO:0005840">
    <property type="term" value="C:ribosome"/>
    <property type="evidence" value="ECO:0007669"/>
    <property type="project" value="UniProtKB-KW"/>
</dbReference>
<dbReference type="GO" id="GO:0019843">
    <property type="term" value="F:rRNA binding"/>
    <property type="evidence" value="ECO:0007669"/>
    <property type="project" value="UniProtKB-UniRule"/>
</dbReference>
<dbReference type="GO" id="GO:0003735">
    <property type="term" value="F:structural constituent of ribosome"/>
    <property type="evidence" value="ECO:0007669"/>
    <property type="project" value="InterPro"/>
</dbReference>
<dbReference type="GO" id="GO:0006412">
    <property type="term" value="P:translation"/>
    <property type="evidence" value="ECO:0007669"/>
    <property type="project" value="UniProtKB-UniRule"/>
</dbReference>
<dbReference type="FunFam" id="3.30.1370.30:FF:000003">
    <property type="entry name" value="30S ribosomal protein S8"/>
    <property type="match status" value="1"/>
</dbReference>
<dbReference type="FunFam" id="3.30.1490.10:FF:000001">
    <property type="entry name" value="30S ribosomal protein S8"/>
    <property type="match status" value="1"/>
</dbReference>
<dbReference type="Gene3D" id="3.30.1370.30">
    <property type="match status" value="1"/>
</dbReference>
<dbReference type="Gene3D" id="3.30.1490.10">
    <property type="match status" value="1"/>
</dbReference>
<dbReference type="HAMAP" id="MF_01302_B">
    <property type="entry name" value="Ribosomal_uS8_B"/>
    <property type="match status" value="1"/>
</dbReference>
<dbReference type="InterPro" id="IPR000630">
    <property type="entry name" value="Ribosomal_uS8"/>
</dbReference>
<dbReference type="InterPro" id="IPR047863">
    <property type="entry name" value="Ribosomal_uS8_CS"/>
</dbReference>
<dbReference type="InterPro" id="IPR035987">
    <property type="entry name" value="Ribosomal_uS8_sf"/>
</dbReference>
<dbReference type="NCBIfam" id="NF001109">
    <property type="entry name" value="PRK00136.1"/>
    <property type="match status" value="1"/>
</dbReference>
<dbReference type="PANTHER" id="PTHR11758">
    <property type="entry name" value="40S RIBOSOMAL PROTEIN S15A"/>
    <property type="match status" value="1"/>
</dbReference>
<dbReference type="Pfam" id="PF00410">
    <property type="entry name" value="Ribosomal_S8"/>
    <property type="match status" value="1"/>
</dbReference>
<dbReference type="SUPFAM" id="SSF56047">
    <property type="entry name" value="Ribosomal protein S8"/>
    <property type="match status" value="1"/>
</dbReference>
<dbReference type="PROSITE" id="PS00053">
    <property type="entry name" value="RIBOSOMAL_S8"/>
    <property type="match status" value="1"/>
</dbReference>
<protein>
    <recommendedName>
        <fullName evidence="1">Small ribosomal subunit protein uS8</fullName>
    </recommendedName>
    <alternativeName>
        <fullName evidence="2">30S ribosomal protein S8</fullName>
    </alternativeName>
</protein>
<organism>
    <name type="scientific">Burkholderia mallei (strain ATCC 23344)</name>
    <dbReference type="NCBI Taxonomy" id="243160"/>
    <lineage>
        <taxon>Bacteria</taxon>
        <taxon>Pseudomonadati</taxon>
        <taxon>Pseudomonadota</taxon>
        <taxon>Betaproteobacteria</taxon>
        <taxon>Burkholderiales</taxon>
        <taxon>Burkholderiaceae</taxon>
        <taxon>Burkholderia</taxon>
        <taxon>pseudomallei group</taxon>
    </lineage>
</organism>
<feature type="chain" id="PRO_0000126384" description="Small ribosomal subunit protein uS8">
    <location>
        <begin position="1"/>
        <end position="131"/>
    </location>
</feature>
<name>RS8_BURMA</name>